<dbReference type="EMBL" id="BT021190">
    <property type="protein sequence ID" value="AAX31372.1"/>
    <property type="molecule type" value="mRNA"/>
</dbReference>
<dbReference type="EMBL" id="BC148116">
    <property type="protein sequence ID" value="AAI48117.1"/>
    <property type="molecule type" value="mRNA"/>
</dbReference>
<dbReference type="RefSeq" id="NP_001029670.1">
    <property type="nucleotide sequence ID" value="NM_001034498.1"/>
</dbReference>
<dbReference type="SMR" id="Q5BIN4"/>
<dbReference type="FunCoup" id="Q5BIN4">
    <property type="interactions" value="3664"/>
</dbReference>
<dbReference type="STRING" id="9913.ENSBTAP00000011080"/>
<dbReference type="PaxDb" id="9913-ENSBTAP00000011080"/>
<dbReference type="GeneID" id="515555"/>
<dbReference type="KEGG" id="bta:515555"/>
<dbReference type="CTD" id="29928"/>
<dbReference type="VEuPathDB" id="HostDB:ENSBTAG00000008423"/>
<dbReference type="eggNOG" id="KOG3225">
    <property type="taxonomic scope" value="Eukaryota"/>
</dbReference>
<dbReference type="HOGENOM" id="CLU_091077_0_0_1"/>
<dbReference type="InParanoid" id="Q5BIN4"/>
<dbReference type="OMA" id="VNPNMAD"/>
<dbReference type="OrthoDB" id="75343at2759"/>
<dbReference type="TreeFam" id="TF105836"/>
<dbReference type="Reactome" id="R-BTA-1268020">
    <property type="pathway name" value="Mitochondrial protein import"/>
</dbReference>
<dbReference type="Proteomes" id="UP000009136">
    <property type="component" value="Chromosome 19"/>
</dbReference>
<dbReference type="Bgee" id="ENSBTAG00000008423">
    <property type="expression patterns" value="Expressed in oocyte and 106 other cell types or tissues"/>
</dbReference>
<dbReference type="GO" id="GO:0042721">
    <property type="term" value="C:TIM22 mitochondrial import inner membrane insertion complex"/>
    <property type="evidence" value="ECO:0000250"/>
    <property type="project" value="UniProtKB"/>
</dbReference>
<dbReference type="GO" id="GO:0030943">
    <property type="term" value="F:mitochondrion targeting sequence binding"/>
    <property type="evidence" value="ECO:0000318"/>
    <property type="project" value="GO_Central"/>
</dbReference>
<dbReference type="GO" id="GO:0008320">
    <property type="term" value="F:protein transmembrane transporter activity"/>
    <property type="evidence" value="ECO:0000318"/>
    <property type="project" value="GO_Central"/>
</dbReference>
<dbReference type="GO" id="GO:0045039">
    <property type="term" value="P:protein insertion into mitochondrial inner membrane"/>
    <property type="evidence" value="ECO:0000250"/>
    <property type="project" value="UniProtKB"/>
</dbReference>
<dbReference type="InterPro" id="IPR039175">
    <property type="entry name" value="TIM22"/>
</dbReference>
<dbReference type="PANTHER" id="PTHR14110">
    <property type="entry name" value="MITOCHONDRIAL IMPORT INNER MEMBRANE TRANSLOCASE SUBUNIT TIM22"/>
    <property type="match status" value="1"/>
</dbReference>
<dbReference type="PANTHER" id="PTHR14110:SF0">
    <property type="entry name" value="MITOCHONDRIAL IMPORT INNER MEMBRANE TRANSLOCASE SUBUNIT TIM22"/>
    <property type="match status" value="1"/>
</dbReference>
<dbReference type="Pfam" id="PF02466">
    <property type="entry name" value="Tim17"/>
    <property type="match status" value="1"/>
</dbReference>
<accession>Q5BIN4</accession>
<accession>A6QLX1</accession>
<feature type="chain" id="PRO_0000210297" description="Mitochondrial import inner membrane translocase subunit Tim22">
    <location>
        <begin position="1"/>
        <end position="194"/>
    </location>
</feature>
<feature type="transmembrane region" description="Helical" evidence="3">
    <location>
        <begin position="74"/>
        <end position="94"/>
    </location>
</feature>
<feature type="transmembrane region" description="Helical" evidence="3">
    <location>
        <begin position="123"/>
        <end position="143"/>
    </location>
</feature>
<feature type="transmembrane region" description="Helical" evidence="3">
    <location>
        <begin position="170"/>
        <end position="190"/>
    </location>
</feature>
<feature type="disulfide bond" evidence="2">
    <location>
        <begin position="69"/>
        <end position="141"/>
    </location>
</feature>
<feature type="disulfide bond" evidence="2">
    <location>
        <begin position="160"/>
        <end position="179"/>
    </location>
</feature>
<comment type="function">
    <text evidence="1">Essential core component of the TIM22 complex, a complex that mediates the import and insertion of multi-pass transmembrane proteins into the mitochondrial inner membrane. In the TIM22 complex, it constitutes the voltage-activated and signal-gated channel. Forms a twin-pore translocase that uses the membrane potential as external driving force in 2 voltage-dependent steps (By similarity).</text>
</comment>
<comment type="subunit">
    <text evidence="2">Component of the TIM22 complex, whose core is composed of TIMM22, associated with peripheral protein FXC1/TIMM10B and the 70 kDa heterohexamer. In most cases, the 70 kDa complex is composed of TIMM9 and TIMM10 (TIMM10A or TIMM10B). A small fraction of the 70 kDa complex is composed of TIMM8 (TIMM8A/DDP1 or TIMM8B/DDP2) and TIMM13. The TIM22 complex also contains AGK and TIMM29. Interacts directly with TIMM9, TIMM10A and FXC1/TIMM10B. Interacts (when oxidized) with TIMM29; interaction is direct.</text>
</comment>
<comment type="subcellular location">
    <subcellularLocation>
        <location evidence="2">Mitochondrion inner membrane</location>
        <topology evidence="3">Multi-pass membrane protein</topology>
    </subcellularLocation>
</comment>
<comment type="PTM">
    <text evidence="2">Disulfide bonds promote efficient assembly of the TIM22 complex.</text>
</comment>
<comment type="similarity">
    <text evidence="4">Belongs to the Tim17/Tim22/Tim23 family.</text>
</comment>
<proteinExistence type="evidence at transcript level"/>
<organism>
    <name type="scientific">Bos taurus</name>
    <name type="common">Bovine</name>
    <dbReference type="NCBI Taxonomy" id="9913"/>
    <lineage>
        <taxon>Eukaryota</taxon>
        <taxon>Metazoa</taxon>
        <taxon>Chordata</taxon>
        <taxon>Craniata</taxon>
        <taxon>Vertebrata</taxon>
        <taxon>Euteleostomi</taxon>
        <taxon>Mammalia</taxon>
        <taxon>Eutheria</taxon>
        <taxon>Laurasiatheria</taxon>
        <taxon>Artiodactyla</taxon>
        <taxon>Ruminantia</taxon>
        <taxon>Pecora</taxon>
        <taxon>Bovidae</taxon>
        <taxon>Bovinae</taxon>
        <taxon>Bos</taxon>
    </lineage>
</organism>
<keyword id="KW-1015">Disulfide bond</keyword>
<keyword id="KW-0472">Membrane</keyword>
<keyword id="KW-0496">Mitochondrion</keyword>
<keyword id="KW-0999">Mitochondrion inner membrane</keyword>
<keyword id="KW-0653">Protein transport</keyword>
<keyword id="KW-1185">Reference proteome</keyword>
<keyword id="KW-0811">Translocation</keyword>
<keyword id="KW-0812">Transmembrane</keyword>
<keyword id="KW-1133">Transmembrane helix</keyword>
<keyword id="KW-0813">Transport</keyword>
<gene>
    <name type="primary">TIMM22</name>
    <name type="synonym">TIM22</name>
</gene>
<evidence type="ECO:0000250" key="1">
    <source>
        <dbReference type="UniProtKB" id="Q12328"/>
    </source>
</evidence>
<evidence type="ECO:0000250" key="2">
    <source>
        <dbReference type="UniProtKB" id="Q9Y584"/>
    </source>
</evidence>
<evidence type="ECO:0000255" key="3"/>
<evidence type="ECO:0000305" key="4"/>
<name>TIM22_BOVIN</name>
<sequence length="194" mass="20156">MAATAPKAGGSAPEAAASAEAPLQYSLLLQYLVGDKRQPRLLEPGSLGGIPSPAKSEEQKMIERAMESCAFKAALACVGGFVLGGAFGVFTAGIDTNVGFDPKDPYRTPTAREVLKDMGQRGMSYAKNFAIVGAMFSCTECLVESYRGKSDWKNSVISGCITGGAIGFRAGLKAGVIGCGGFAAFSAAIDYYLR</sequence>
<protein>
    <recommendedName>
        <fullName>Mitochondrial import inner membrane translocase subunit Tim22</fullName>
    </recommendedName>
</protein>
<reference key="1">
    <citation type="journal article" date="2005" name="BMC Genomics">
        <title>Characterization of 954 bovine full-CDS cDNA sequences.</title>
        <authorList>
            <person name="Harhay G.P."/>
            <person name="Sonstegard T.S."/>
            <person name="Keele J.W."/>
            <person name="Heaton M.P."/>
            <person name="Clawson M.L."/>
            <person name="Snelling W.M."/>
            <person name="Wiedmann R.T."/>
            <person name="Van Tassell C.P."/>
            <person name="Smith T.P.L."/>
        </authorList>
    </citation>
    <scope>NUCLEOTIDE SEQUENCE [LARGE SCALE MRNA]</scope>
</reference>
<reference key="2">
    <citation type="submission" date="2007-06" db="EMBL/GenBank/DDBJ databases">
        <authorList>
            <consortium name="NIH - Mammalian Gene Collection (MGC) project"/>
        </authorList>
    </citation>
    <scope>NUCLEOTIDE SEQUENCE [LARGE SCALE MRNA]</scope>
    <source>
        <strain>Hereford</strain>
        <tissue>Fetal cerebellum</tissue>
    </source>
</reference>